<evidence type="ECO:0000250" key="1">
    <source>
        <dbReference type="UniProtKB" id="P25786"/>
    </source>
</evidence>
<evidence type="ECO:0000255" key="2">
    <source>
        <dbReference type="PROSITE-ProRule" id="PRU00808"/>
    </source>
</evidence>
<evidence type="ECO:0000256" key="3">
    <source>
        <dbReference type="SAM" id="MobiDB-lite"/>
    </source>
</evidence>
<sequence length="260" mass="28925">MLPVAGSDVTVWSPQGRIHQIEYAMEAVKQGSATVGLKSKTHAVLVALKRAQSELAAHQKKILYVDNHIGISIAGLTADARLLCNFMRQECLDSRFVFDRPLPVSRLVSLIGSKTQIPTQRYGRRPYGVGLLIAGYDDMGPHIFQTCPSANYFDCKAMSIGARSQSARNYLERHMTEFTDCNLNELVKHGLRALRETLPAEQDLTTKNVSIGIVGKDMEFTIYDDDDVAPFLEGLEERPQRKPALPADEPAEKAEEPMEH</sequence>
<accession>O42265</accession>
<name>PSA1_CHICK</name>
<protein>
    <recommendedName>
        <fullName>Proteasome subunit alpha type-1</fullName>
    </recommendedName>
    <alternativeName>
        <fullName>Macropain subunit C2</fullName>
    </alternativeName>
    <alternativeName>
        <fullName>Multicatalytic endopeptidase complex subunit C2</fullName>
    </alternativeName>
    <alternativeName>
        <fullName>Proteasome component C2</fullName>
    </alternativeName>
</protein>
<organism>
    <name type="scientific">Gallus gallus</name>
    <name type="common">Chicken</name>
    <dbReference type="NCBI Taxonomy" id="9031"/>
    <lineage>
        <taxon>Eukaryota</taxon>
        <taxon>Metazoa</taxon>
        <taxon>Chordata</taxon>
        <taxon>Craniata</taxon>
        <taxon>Vertebrata</taxon>
        <taxon>Euteleostomi</taxon>
        <taxon>Archelosauria</taxon>
        <taxon>Archosauria</taxon>
        <taxon>Dinosauria</taxon>
        <taxon>Saurischia</taxon>
        <taxon>Theropoda</taxon>
        <taxon>Coelurosauria</taxon>
        <taxon>Aves</taxon>
        <taxon>Neognathae</taxon>
        <taxon>Galloanserae</taxon>
        <taxon>Galliformes</taxon>
        <taxon>Phasianidae</taxon>
        <taxon>Phasianinae</taxon>
        <taxon>Gallus</taxon>
    </lineage>
</organism>
<proteinExistence type="evidence at transcript level"/>
<dbReference type="EMBL" id="AF027978">
    <property type="protein sequence ID" value="AAC16604.1"/>
    <property type="molecule type" value="mRNA"/>
</dbReference>
<dbReference type="RefSeq" id="NP_990351.1">
    <property type="nucleotide sequence ID" value="NM_205020.1"/>
</dbReference>
<dbReference type="SMR" id="O42265"/>
<dbReference type="FunCoup" id="O42265">
    <property type="interactions" value="2909"/>
</dbReference>
<dbReference type="STRING" id="9031.ENSGALP00000059917"/>
<dbReference type="PaxDb" id="9031-ENSGALP00000009681"/>
<dbReference type="GeneID" id="395874"/>
<dbReference type="KEGG" id="gga:395874"/>
<dbReference type="CTD" id="5682"/>
<dbReference type="VEuPathDB" id="HostDB:geneid_395874"/>
<dbReference type="eggNOG" id="KOG0863">
    <property type="taxonomic scope" value="Eukaryota"/>
</dbReference>
<dbReference type="InParanoid" id="O42265"/>
<dbReference type="OrthoDB" id="431557at2759"/>
<dbReference type="PhylomeDB" id="O42265"/>
<dbReference type="PRO" id="PR:O42265"/>
<dbReference type="Proteomes" id="UP000000539">
    <property type="component" value="Unassembled WGS sequence"/>
</dbReference>
<dbReference type="GO" id="GO:0005737">
    <property type="term" value="C:cytoplasm"/>
    <property type="evidence" value="ECO:0007669"/>
    <property type="project" value="UniProtKB-SubCell"/>
</dbReference>
<dbReference type="GO" id="GO:0005634">
    <property type="term" value="C:nucleus"/>
    <property type="evidence" value="ECO:0000318"/>
    <property type="project" value="GO_Central"/>
</dbReference>
<dbReference type="GO" id="GO:0005839">
    <property type="term" value="C:proteasome core complex"/>
    <property type="evidence" value="ECO:0000250"/>
    <property type="project" value="UniProtKB"/>
</dbReference>
<dbReference type="GO" id="GO:0019773">
    <property type="term" value="C:proteasome core complex, alpha-subunit complex"/>
    <property type="evidence" value="ECO:0000250"/>
    <property type="project" value="UniProtKB"/>
</dbReference>
<dbReference type="GO" id="GO:0043161">
    <property type="term" value="P:proteasome-mediated ubiquitin-dependent protein catabolic process"/>
    <property type="evidence" value="ECO:0000318"/>
    <property type="project" value="GO_Central"/>
</dbReference>
<dbReference type="CDD" id="cd03749">
    <property type="entry name" value="proteasome_alpha_type_1"/>
    <property type="match status" value="1"/>
</dbReference>
<dbReference type="FunFam" id="3.60.20.10:FF:000025">
    <property type="entry name" value="Proteasome subunit alpha type"/>
    <property type="match status" value="1"/>
</dbReference>
<dbReference type="Gene3D" id="3.60.20.10">
    <property type="entry name" value="Glutamine Phosphoribosylpyrophosphate, subunit 1, domain 1"/>
    <property type="match status" value="1"/>
</dbReference>
<dbReference type="InterPro" id="IPR029055">
    <property type="entry name" value="Ntn_hydrolases_N"/>
</dbReference>
<dbReference type="InterPro" id="IPR050115">
    <property type="entry name" value="Proteasome_alpha"/>
</dbReference>
<dbReference type="InterPro" id="IPR023332">
    <property type="entry name" value="Proteasome_alpha-type"/>
</dbReference>
<dbReference type="InterPro" id="IPR035144">
    <property type="entry name" value="Proteasome_alpha1"/>
</dbReference>
<dbReference type="InterPro" id="IPR000426">
    <property type="entry name" value="Proteasome_asu_N"/>
</dbReference>
<dbReference type="InterPro" id="IPR001353">
    <property type="entry name" value="Proteasome_sua/b"/>
</dbReference>
<dbReference type="PANTHER" id="PTHR11599">
    <property type="entry name" value="PROTEASOME SUBUNIT ALPHA/BETA"/>
    <property type="match status" value="1"/>
</dbReference>
<dbReference type="Pfam" id="PF00227">
    <property type="entry name" value="Proteasome"/>
    <property type="match status" value="1"/>
</dbReference>
<dbReference type="Pfam" id="PF10584">
    <property type="entry name" value="Proteasome_A_N"/>
    <property type="match status" value="1"/>
</dbReference>
<dbReference type="SMART" id="SM00948">
    <property type="entry name" value="Proteasome_A_N"/>
    <property type="match status" value="1"/>
</dbReference>
<dbReference type="SUPFAM" id="SSF56235">
    <property type="entry name" value="N-terminal nucleophile aminohydrolases (Ntn hydrolases)"/>
    <property type="match status" value="1"/>
</dbReference>
<dbReference type="PROSITE" id="PS00388">
    <property type="entry name" value="PROTEASOME_ALPHA_1"/>
    <property type="match status" value="1"/>
</dbReference>
<dbReference type="PROSITE" id="PS51475">
    <property type="entry name" value="PROTEASOME_ALPHA_2"/>
    <property type="match status" value="1"/>
</dbReference>
<gene>
    <name type="primary">PSMA1</name>
</gene>
<feature type="chain" id="PRO_0000124065" description="Proteasome subunit alpha type-1">
    <location>
        <begin position="1"/>
        <end position="260"/>
    </location>
</feature>
<feature type="region of interest" description="Disordered" evidence="3">
    <location>
        <begin position="231"/>
        <end position="260"/>
    </location>
</feature>
<feature type="compositionally biased region" description="Basic and acidic residues" evidence="3">
    <location>
        <begin position="250"/>
        <end position="260"/>
    </location>
</feature>
<comment type="function">
    <text evidence="1">Component of the 20S core proteasome complex involved in the proteolytic degradation of most intracellular proteins. This complex plays numerous essential roles within the cell by associating with different regulatory particles. Associated with two 19S regulatory particles, forms the 26S proteasome and thus participates in the ATP-dependent degradation of ubiquitinated proteins. The 26S proteasome plays a key role in the maintenance of protein homeostasis by removing misfolded or damaged proteins that could impair cellular functions, and by removing proteins whose functions are no longer required. Associated with the PA200 or PA28, the 20S proteasome mediates ubiquitin-independent protein degradation. This type of proteolysis is required in several pathways including spermatogenesis (20S-PA200 complex) or generation of a subset of MHC class I-presented antigenic peptides (20S-PA28 complex).</text>
</comment>
<comment type="subunit">
    <text evidence="1">The 26S proteasome consists of a 20S proteasome core and two 19S regulatory subunits. The 20S proteasome core is a barrel-shaped complex made of 28 subunits that are arranged in four stacked rings. The two outer rings are each formed by seven alpha subunits, and the two inner rings are formed by seven beta subunits. The proteolytic activity is exerted by three beta-subunits PSMB5, PSMB6 and PSMB7.</text>
</comment>
<comment type="subcellular location">
    <subcellularLocation>
        <location evidence="1">Cytoplasm</location>
    </subcellularLocation>
    <subcellularLocation>
        <location evidence="1">Nucleus</location>
    </subcellularLocation>
</comment>
<comment type="similarity">
    <text evidence="2">Belongs to the peptidase T1A family.</text>
</comment>
<reference key="1">
    <citation type="submission" date="1998-05" db="EMBL/GenBank/DDBJ databases">
        <title>Cloning of a chick homologue of human proteasome subunit C2.</title>
        <authorList>
            <person name="Singh I."/>
            <person name="Wagner B.J."/>
        </authorList>
    </citation>
    <scope>NUCLEOTIDE SEQUENCE [MRNA]</scope>
</reference>
<keyword id="KW-0963">Cytoplasm</keyword>
<keyword id="KW-0539">Nucleus</keyword>
<keyword id="KW-0647">Proteasome</keyword>
<keyword id="KW-1185">Reference proteome</keyword>